<feature type="chain" id="PRO_0000353350" description="DNA-directed RNA polymerase subunit beta'">
    <location>
        <begin position="1"/>
        <end position="1385"/>
    </location>
</feature>
<feature type="binding site" evidence="1">
    <location>
        <position position="72"/>
    </location>
    <ligand>
        <name>Zn(2+)</name>
        <dbReference type="ChEBI" id="CHEBI:29105"/>
        <label>1</label>
    </ligand>
</feature>
<feature type="binding site" evidence="1">
    <location>
        <position position="74"/>
    </location>
    <ligand>
        <name>Zn(2+)</name>
        <dbReference type="ChEBI" id="CHEBI:29105"/>
        <label>1</label>
    </ligand>
</feature>
<feature type="binding site" evidence="1">
    <location>
        <position position="87"/>
    </location>
    <ligand>
        <name>Zn(2+)</name>
        <dbReference type="ChEBI" id="CHEBI:29105"/>
        <label>1</label>
    </ligand>
</feature>
<feature type="binding site" evidence="1">
    <location>
        <position position="90"/>
    </location>
    <ligand>
        <name>Zn(2+)</name>
        <dbReference type="ChEBI" id="CHEBI:29105"/>
        <label>1</label>
    </ligand>
</feature>
<feature type="binding site" evidence="1">
    <location>
        <position position="467"/>
    </location>
    <ligand>
        <name>Mg(2+)</name>
        <dbReference type="ChEBI" id="CHEBI:18420"/>
    </ligand>
</feature>
<feature type="binding site" evidence="1">
    <location>
        <position position="469"/>
    </location>
    <ligand>
        <name>Mg(2+)</name>
        <dbReference type="ChEBI" id="CHEBI:18420"/>
    </ligand>
</feature>
<feature type="binding site" evidence="1">
    <location>
        <position position="471"/>
    </location>
    <ligand>
        <name>Mg(2+)</name>
        <dbReference type="ChEBI" id="CHEBI:18420"/>
    </ligand>
</feature>
<feature type="binding site" evidence="1">
    <location>
        <position position="829"/>
    </location>
    <ligand>
        <name>Zn(2+)</name>
        <dbReference type="ChEBI" id="CHEBI:29105"/>
        <label>2</label>
    </ligand>
</feature>
<feature type="binding site" evidence="1">
    <location>
        <position position="910"/>
    </location>
    <ligand>
        <name>Zn(2+)</name>
        <dbReference type="ChEBI" id="CHEBI:29105"/>
        <label>2</label>
    </ligand>
</feature>
<feature type="binding site" evidence="1">
    <location>
        <position position="917"/>
    </location>
    <ligand>
        <name>Zn(2+)</name>
        <dbReference type="ChEBI" id="CHEBI:29105"/>
        <label>2</label>
    </ligand>
</feature>
<feature type="binding site" evidence="1">
    <location>
        <position position="920"/>
    </location>
    <ligand>
        <name>Zn(2+)</name>
        <dbReference type="ChEBI" id="CHEBI:29105"/>
        <label>2</label>
    </ligand>
</feature>
<name>RPOC_ELUMP</name>
<organism>
    <name type="scientific">Elusimicrobium minutum (strain Pei191)</name>
    <dbReference type="NCBI Taxonomy" id="445932"/>
    <lineage>
        <taxon>Bacteria</taxon>
        <taxon>Pseudomonadati</taxon>
        <taxon>Elusimicrobiota</taxon>
        <taxon>Elusimicrobia</taxon>
        <taxon>Elusimicrobiales</taxon>
        <taxon>Elusimicrobiaceae</taxon>
        <taxon>Elusimicrobium</taxon>
    </lineage>
</organism>
<dbReference type="EC" id="2.7.7.6" evidence="1"/>
<dbReference type="EMBL" id="CP001055">
    <property type="protein sequence ID" value="ACC98976.1"/>
    <property type="molecule type" value="Genomic_DNA"/>
</dbReference>
<dbReference type="RefSeq" id="WP_012415591.1">
    <property type="nucleotide sequence ID" value="NC_010644.1"/>
</dbReference>
<dbReference type="SMR" id="B2KEN0"/>
<dbReference type="STRING" id="445932.Emin_1427"/>
<dbReference type="KEGG" id="emi:Emin_1427"/>
<dbReference type="HOGENOM" id="CLU_000524_3_1_0"/>
<dbReference type="OrthoDB" id="9815296at2"/>
<dbReference type="Proteomes" id="UP000001029">
    <property type="component" value="Chromosome"/>
</dbReference>
<dbReference type="GO" id="GO:0000428">
    <property type="term" value="C:DNA-directed RNA polymerase complex"/>
    <property type="evidence" value="ECO:0007669"/>
    <property type="project" value="UniProtKB-KW"/>
</dbReference>
<dbReference type="GO" id="GO:0003677">
    <property type="term" value="F:DNA binding"/>
    <property type="evidence" value="ECO:0007669"/>
    <property type="project" value="UniProtKB-UniRule"/>
</dbReference>
<dbReference type="GO" id="GO:0003899">
    <property type="term" value="F:DNA-directed RNA polymerase activity"/>
    <property type="evidence" value="ECO:0007669"/>
    <property type="project" value="UniProtKB-UniRule"/>
</dbReference>
<dbReference type="GO" id="GO:0000287">
    <property type="term" value="F:magnesium ion binding"/>
    <property type="evidence" value="ECO:0007669"/>
    <property type="project" value="UniProtKB-UniRule"/>
</dbReference>
<dbReference type="GO" id="GO:0008270">
    <property type="term" value="F:zinc ion binding"/>
    <property type="evidence" value="ECO:0007669"/>
    <property type="project" value="UniProtKB-UniRule"/>
</dbReference>
<dbReference type="GO" id="GO:0006351">
    <property type="term" value="P:DNA-templated transcription"/>
    <property type="evidence" value="ECO:0007669"/>
    <property type="project" value="UniProtKB-UniRule"/>
</dbReference>
<dbReference type="CDD" id="cd02655">
    <property type="entry name" value="RNAP_beta'_C"/>
    <property type="match status" value="1"/>
</dbReference>
<dbReference type="CDD" id="cd01609">
    <property type="entry name" value="RNAP_beta'_N"/>
    <property type="match status" value="1"/>
</dbReference>
<dbReference type="Gene3D" id="1.10.132.30">
    <property type="match status" value="1"/>
</dbReference>
<dbReference type="Gene3D" id="1.10.150.390">
    <property type="match status" value="1"/>
</dbReference>
<dbReference type="Gene3D" id="1.10.1790.20">
    <property type="match status" value="1"/>
</dbReference>
<dbReference type="Gene3D" id="1.10.40.90">
    <property type="match status" value="1"/>
</dbReference>
<dbReference type="Gene3D" id="2.40.40.20">
    <property type="match status" value="1"/>
</dbReference>
<dbReference type="Gene3D" id="2.40.50.100">
    <property type="match status" value="3"/>
</dbReference>
<dbReference type="Gene3D" id="4.10.860.120">
    <property type="entry name" value="RNA polymerase II, clamp domain"/>
    <property type="match status" value="1"/>
</dbReference>
<dbReference type="Gene3D" id="1.10.274.100">
    <property type="entry name" value="RNA polymerase Rpb1, domain 3"/>
    <property type="match status" value="1"/>
</dbReference>
<dbReference type="HAMAP" id="MF_01322">
    <property type="entry name" value="RNApol_bact_RpoC"/>
    <property type="match status" value="1"/>
</dbReference>
<dbReference type="InterPro" id="IPR045867">
    <property type="entry name" value="DNA-dir_RpoC_beta_prime"/>
</dbReference>
<dbReference type="InterPro" id="IPR012754">
    <property type="entry name" value="DNA-dir_RpoC_beta_prime_bact"/>
</dbReference>
<dbReference type="InterPro" id="IPR000722">
    <property type="entry name" value="RNA_pol_asu"/>
</dbReference>
<dbReference type="InterPro" id="IPR006592">
    <property type="entry name" value="RNA_pol_N"/>
</dbReference>
<dbReference type="InterPro" id="IPR007080">
    <property type="entry name" value="RNA_pol_Rpb1_1"/>
</dbReference>
<dbReference type="InterPro" id="IPR007066">
    <property type="entry name" value="RNA_pol_Rpb1_3"/>
</dbReference>
<dbReference type="InterPro" id="IPR042102">
    <property type="entry name" value="RNA_pol_Rpb1_3_sf"/>
</dbReference>
<dbReference type="InterPro" id="IPR007083">
    <property type="entry name" value="RNA_pol_Rpb1_4"/>
</dbReference>
<dbReference type="InterPro" id="IPR007081">
    <property type="entry name" value="RNA_pol_Rpb1_5"/>
</dbReference>
<dbReference type="InterPro" id="IPR044893">
    <property type="entry name" value="RNA_pol_Rpb1_clamp_domain"/>
</dbReference>
<dbReference type="InterPro" id="IPR038120">
    <property type="entry name" value="Rpb1_funnel_sf"/>
</dbReference>
<dbReference type="NCBIfam" id="TIGR02386">
    <property type="entry name" value="rpoC_TIGR"/>
    <property type="match status" value="1"/>
</dbReference>
<dbReference type="PANTHER" id="PTHR19376">
    <property type="entry name" value="DNA-DIRECTED RNA POLYMERASE"/>
    <property type="match status" value="1"/>
</dbReference>
<dbReference type="PANTHER" id="PTHR19376:SF54">
    <property type="entry name" value="DNA-DIRECTED RNA POLYMERASE SUBUNIT BETA"/>
    <property type="match status" value="1"/>
</dbReference>
<dbReference type="Pfam" id="PF04997">
    <property type="entry name" value="RNA_pol_Rpb1_1"/>
    <property type="match status" value="1"/>
</dbReference>
<dbReference type="Pfam" id="PF00623">
    <property type="entry name" value="RNA_pol_Rpb1_2"/>
    <property type="match status" value="2"/>
</dbReference>
<dbReference type="Pfam" id="PF04983">
    <property type="entry name" value="RNA_pol_Rpb1_3"/>
    <property type="match status" value="1"/>
</dbReference>
<dbReference type="Pfam" id="PF05000">
    <property type="entry name" value="RNA_pol_Rpb1_4"/>
    <property type="match status" value="1"/>
</dbReference>
<dbReference type="Pfam" id="PF04998">
    <property type="entry name" value="RNA_pol_Rpb1_5"/>
    <property type="match status" value="1"/>
</dbReference>
<dbReference type="SMART" id="SM00663">
    <property type="entry name" value="RPOLA_N"/>
    <property type="match status" value="1"/>
</dbReference>
<dbReference type="SUPFAM" id="SSF64484">
    <property type="entry name" value="beta and beta-prime subunits of DNA dependent RNA-polymerase"/>
    <property type="match status" value="1"/>
</dbReference>
<accession>B2KEN0</accession>
<proteinExistence type="inferred from homology"/>
<comment type="function">
    <text evidence="1">DNA-dependent RNA polymerase catalyzes the transcription of DNA into RNA using the four ribonucleoside triphosphates as substrates.</text>
</comment>
<comment type="catalytic activity">
    <reaction evidence="1">
        <text>RNA(n) + a ribonucleoside 5'-triphosphate = RNA(n+1) + diphosphate</text>
        <dbReference type="Rhea" id="RHEA:21248"/>
        <dbReference type="Rhea" id="RHEA-COMP:14527"/>
        <dbReference type="Rhea" id="RHEA-COMP:17342"/>
        <dbReference type="ChEBI" id="CHEBI:33019"/>
        <dbReference type="ChEBI" id="CHEBI:61557"/>
        <dbReference type="ChEBI" id="CHEBI:140395"/>
        <dbReference type="EC" id="2.7.7.6"/>
    </reaction>
</comment>
<comment type="cofactor">
    <cofactor evidence="1">
        <name>Mg(2+)</name>
        <dbReference type="ChEBI" id="CHEBI:18420"/>
    </cofactor>
    <text evidence="1">Binds 1 Mg(2+) ion per subunit.</text>
</comment>
<comment type="cofactor">
    <cofactor evidence="1">
        <name>Zn(2+)</name>
        <dbReference type="ChEBI" id="CHEBI:29105"/>
    </cofactor>
    <text evidence="1">Binds 2 Zn(2+) ions per subunit.</text>
</comment>
<comment type="subunit">
    <text evidence="1">The RNAP catalytic core consists of 2 alpha, 1 beta, 1 beta' and 1 omega subunit. When a sigma factor is associated with the core the holoenzyme is formed, which can initiate transcription.</text>
</comment>
<comment type="similarity">
    <text evidence="1">Belongs to the RNA polymerase beta' chain family.</text>
</comment>
<sequence length="1385" mass="152805">MSEKTKKTKRLDDLNFFDFDAIKLGIASPEQIMAWSHGEVKKPETINYRTLKPERDGLFCERIFGPTKDYECSCGKYRWVKYKGMQCDRCGVEITEAKVRRERMGHLELAVPVAHVWFLRKNPSRIGIMLDMRITDLERVVYYASYVVVEDCIDSVTGRTDYKKGELLTDVQVREARKKHGSRLKVDIGAPAVKKLLSDIDFDKEIPTLHVQLAETQSELERTKLIRRIKTMEEFKASGNRPEWMILSVLPVIPPDLRPLVPLDGGRFAASDLNDLYRRIINRNNRLKHIESLRAPEVMIYNEKRLLQEAVDALIENGARGKFFIGAGGRPLKSLSDVIKGKHGRFRQNLLGKRVDYSGRSVIVVGPSLKLHQCGLPKLMALELFKPFIIGELMKKEGVTLKAAKKMLERVRPEIWDILEQVTKNHPVMLNRAPTLHRLGIQAFEPVLIEGKAIQLHPLTCAAFNADFDGDQMAVHVPLSLEAQLEARTLMLATNNILSPASGRPIAAPSHDIVMGISFLTKVKLNDFGEGAVFGSMEEALMAYAYGKVSLHARIKVRGITAIKEDGMNEKDLKNVNTWKDYTTVGKIIFNNNLPEGWPYVNGAVGKKELAAIIDECYKSKKYGKYETVQLLDRIMKLGYNYATRSGLSISIADMIVPAAKQKYIDAAKKRIKEIQGQAEAGIITEGERYNKVIDIWTRVTDDVAVEQFKEMKKFEEAPYSGEGQRFNSVFLMADSGARGSRQQVRQLAGMRGLMAKPQKKLTGGQGEIIESPITSNFREGLSVLEYFISTHGGRKGLSDTALKTAEAGYLTRRLIDVAHNLVVMEEDCGTTNGVVVSSLMSGEEVVEPIEERILGRTSLEDVIVKIKKADGKEEEKTIIKEGDSITLEQSKLVKKYGVQNLRIRSVLTCESKNGVCGKCYGVSLVSGNISNVGDSVGIIAAQSIGEPGTQLTLRTFHIGGAASRMLSQSQAVAELGGKVTFKDIKVITNRFDNKICISRNGAIFVEAANGTIKEYKIQYGATLHIADKVTVEKGTLMAEWDPHSIPVLSETEGTARLTDVSEGITLQEERNKVTGVIERKITASRMGKKNPRIVIEGKGGKKVSLPLPVDTILLVENGEDVLAGDILAKIAKASGGTKDITSGLPRIAELFEARKPRNAAIMSEFAGVVSLETSPKGLVEIVVRSEETGQVKQYAVPQGKHLVVYEGDHVGVGEALTDGAIDPHDVLRVKGIKEVQEFLLNAIQEVYRLQGVTINDRHIEVIVRQMLGNVKIVDAGDTPLLKGEIVSRATLLKHNAQAEKEGKKIAVGDPILLGISKASLASDSFISAASFQETTKVLTDAAITGQVDTLQGLKENVIVGHLIPAGTGISAREFTKEFEAAKKK</sequence>
<evidence type="ECO:0000255" key="1">
    <source>
        <dbReference type="HAMAP-Rule" id="MF_01322"/>
    </source>
</evidence>
<reference key="1">
    <citation type="journal article" date="2009" name="Appl. Environ. Microbiol.">
        <title>Genomic analysis of 'Elusimicrobium minutum,' the first cultivated representative of the phylum 'Elusimicrobia' (formerly termite group 1).</title>
        <authorList>
            <person name="Herlemann D.P.R."/>
            <person name="Geissinger O."/>
            <person name="Ikeda-Ohtsubo W."/>
            <person name="Kunin V."/>
            <person name="Sun H."/>
            <person name="Lapidus A."/>
            <person name="Hugenholtz P."/>
            <person name="Brune A."/>
        </authorList>
    </citation>
    <scope>NUCLEOTIDE SEQUENCE [LARGE SCALE GENOMIC DNA]</scope>
    <source>
        <strain>Pei191</strain>
    </source>
</reference>
<keyword id="KW-0240">DNA-directed RNA polymerase</keyword>
<keyword id="KW-0460">Magnesium</keyword>
<keyword id="KW-0479">Metal-binding</keyword>
<keyword id="KW-0548">Nucleotidyltransferase</keyword>
<keyword id="KW-1185">Reference proteome</keyword>
<keyword id="KW-0804">Transcription</keyword>
<keyword id="KW-0808">Transferase</keyword>
<keyword id="KW-0862">Zinc</keyword>
<protein>
    <recommendedName>
        <fullName evidence="1">DNA-directed RNA polymerase subunit beta'</fullName>
        <shortName evidence="1">RNAP subunit beta'</shortName>
        <ecNumber evidence="1">2.7.7.6</ecNumber>
    </recommendedName>
    <alternativeName>
        <fullName evidence="1">RNA polymerase subunit beta'</fullName>
    </alternativeName>
    <alternativeName>
        <fullName evidence="1">Transcriptase subunit beta'</fullName>
    </alternativeName>
</protein>
<gene>
    <name evidence="1" type="primary">rpoC</name>
    <name type="ordered locus">Emin_1427</name>
</gene>